<keyword id="KW-0963">Cytoplasm</keyword>
<keyword id="KW-0274">FAD</keyword>
<keyword id="KW-0285">Flavoprotein</keyword>
<keyword id="KW-0489">Methyltransferase</keyword>
<keyword id="KW-0520">NAD</keyword>
<keyword id="KW-0521">NADP</keyword>
<keyword id="KW-1185">Reference proteome</keyword>
<keyword id="KW-0808">Transferase</keyword>
<keyword id="KW-0819">tRNA processing</keyword>
<protein>
    <recommendedName>
        <fullName evidence="1">Methylenetetrahydrofolate--tRNA-(uracil-5-)-methyltransferase TrmFO</fullName>
        <ecNumber evidence="1">2.1.1.74</ecNumber>
    </recommendedName>
    <alternativeName>
        <fullName evidence="1">Folate-dependent tRNA (uracil-5-)-methyltransferase</fullName>
    </alternativeName>
    <alternativeName>
        <fullName evidence="1">Folate-dependent tRNA(M-5-U54)-methyltransferase</fullName>
    </alternativeName>
</protein>
<comment type="function">
    <text evidence="1">Catalyzes the folate-dependent formation of 5-methyl-uridine at position 54 (M-5-U54) in all tRNAs.</text>
</comment>
<comment type="catalytic activity">
    <reaction evidence="1">
        <text>uridine(54) in tRNA + (6R)-5,10-methylene-5,6,7,8-tetrahydrofolate + NADH + H(+) = 5-methyluridine(54) in tRNA + (6S)-5,6,7,8-tetrahydrofolate + NAD(+)</text>
        <dbReference type="Rhea" id="RHEA:16873"/>
        <dbReference type="Rhea" id="RHEA-COMP:10167"/>
        <dbReference type="Rhea" id="RHEA-COMP:10193"/>
        <dbReference type="ChEBI" id="CHEBI:15378"/>
        <dbReference type="ChEBI" id="CHEBI:15636"/>
        <dbReference type="ChEBI" id="CHEBI:57453"/>
        <dbReference type="ChEBI" id="CHEBI:57540"/>
        <dbReference type="ChEBI" id="CHEBI:57945"/>
        <dbReference type="ChEBI" id="CHEBI:65315"/>
        <dbReference type="ChEBI" id="CHEBI:74447"/>
        <dbReference type="EC" id="2.1.1.74"/>
    </reaction>
</comment>
<comment type="catalytic activity">
    <reaction evidence="1">
        <text>uridine(54) in tRNA + (6R)-5,10-methylene-5,6,7,8-tetrahydrofolate + NADPH + H(+) = 5-methyluridine(54) in tRNA + (6S)-5,6,7,8-tetrahydrofolate + NADP(+)</text>
        <dbReference type="Rhea" id="RHEA:62372"/>
        <dbReference type="Rhea" id="RHEA-COMP:10167"/>
        <dbReference type="Rhea" id="RHEA-COMP:10193"/>
        <dbReference type="ChEBI" id="CHEBI:15378"/>
        <dbReference type="ChEBI" id="CHEBI:15636"/>
        <dbReference type="ChEBI" id="CHEBI:57453"/>
        <dbReference type="ChEBI" id="CHEBI:57783"/>
        <dbReference type="ChEBI" id="CHEBI:58349"/>
        <dbReference type="ChEBI" id="CHEBI:65315"/>
        <dbReference type="ChEBI" id="CHEBI:74447"/>
        <dbReference type="EC" id="2.1.1.74"/>
    </reaction>
</comment>
<comment type="cofactor">
    <cofactor evidence="1">
        <name>FAD</name>
        <dbReference type="ChEBI" id="CHEBI:57692"/>
    </cofactor>
</comment>
<comment type="subcellular location">
    <subcellularLocation>
        <location evidence="1">Cytoplasm</location>
    </subcellularLocation>
</comment>
<comment type="similarity">
    <text evidence="1">Belongs to the MnmG family. TrmFO subfamily.</text>
</comment>
<proteinExistence type="inferred from homology"/>
<feature type="chain" id="PRO_0000117241" description="Methylenetetrahydrofolate--tRNA-(uracil-5-)-methyltransferase TrmFO">
    <location>
        <begin position="1"/>
        <end position="474"/>
    </location>
</feature>
<feature type="binding site" evidence="1">
    <location>
        <begin position="14"/>
        <end position="19"/>
    </location>
    <ligand>
        <name>FAD</name>
        <dbReference type="ChEBI" id="CHEBI:57692"/>
    </ligand>
</feature>
<dbReference type="EC" id="2.1.1.74" evidence="1"/>
<dbReference type="EMBL" id="AE005673">
    <property type="protein sequence ID" value="AAK24567.1"/>
    <property type="molecule type" value="Genomic_DNA"/>
</dbReference>
<dbReference type="PIR" id="C87571">
    <property type="entry name" value="C87571"/>
</dbReference>
<dbReference type="RefSeq" id="NP_421399.1">
    <property type="nucleotide sequence ID" value="NC_002696.2"/>
</dbReference>
<dbReference type="RefSeq" id="WP_010920452.1">
    <property type="nucleotide sequence ID" value="NC_002696.2"/>
</dbReference>
<dbReference type="SMR" id="Q9A566"/>
<dbReference type="STRING" id="190650.CC_2598"/>
<dbReference type="EnsemblBacteria" id="AAK24567">
    <property type="protein sequence ID" value="AAK24567"/>
    <property type="gene ID" value="CC_2598"/>
</dbReference>
<dbReference type="KEGG" id="ccr:CC_2598"/>
<dbReference type="PATRIC" id="fig|190650.5.peg.2612"/>
<dbReference type="eggNOG" id="COG1206">
    <property type="taxonomic scope" value="Bacteria"/>
</dbReference>
<dbReference type="HOGENOM" id="CLU_033057_1_0_5"/>
<dbReference type="BioCyc" id="CAULO:CC2598-MONOMER"/>
<dbReference type="Proteomes" id="UP000001816">
    <property type="component" value="Chromosome"/>
</dbReference>
<dbReference type="GO" id="GO:0005829">
    <property type="term" value="C:cytosol"/>
    <property type="evidence" value="ECO:0007669"/>
    <property type="project" value="TreeGrafter"/>
</dbReference>
<dbReference type="GO" id="GO:0050660">
    <property type="term" value="F:flavin adenine dinucleotide binding"/>
    <property type="evidence" value="ECO:0007669"/>
    <property type="project" value="UniProtKB-UniRule"/>
</dbReference>
<dbReference type="GO" id="GO:0047151">
    <property type="term" value="F:tRNA (uracil(54)-C5)-methyltransferase activity, 5,10-methylenetetrahydrofolate-dependent"/>
    <property type="evidence" value="ECO:0007669"/>
    <property type="project" value="UniProtKB-UniRule"/>
</dbReference>
<dbReference type="GO" id="GO:0030488">
    <property type="term" value="P:tRNA methylation"/>
    <property type="evidence" value="ECO:0007669"/>
    <property type="project" value="TreeGrafter"/>
</dbReference>
<dbReference type="GO" id="GO:0002098">
    <property type="term" value="P:tRNA wobble uridine modification"/>
    <property type="evidence" value="ECO:0007669"/>
    <property type="project" value="TreeGrafter"/>
</dbReference>
<dbReference type="Gene3D" id="3.50.50.60">
    <property type="entry name" value="FAD/NAD(P)-binding domain"/>
    <property type="match status" value="2"/>
</dbReference>
<dbReference type="HAMAP" id="MF_01037">
    <property type="entry name" value="TrmFO"/>
    <property type="match status" value="1"/>
</dbReference>
<dbReference type="InterPro" id="IPR036188">
    <property type="entry name" value="FAD/NAD-bd_sf"/>
</dbReference>
<dbReference type="InterPro" id="IPR002218">
    <property type="entry name" value="MnmG-rel"/>
</dbReference>
<dbReference type="InterPro" id="IPR020595">
    <property type="entry name" value="MnmG-rel_CS"/>
</dbReference>
<dbReference type="InterPro" id="IPR040131">
    <property type="entry name" value="MnmG_N"/>
</dbReference>
<dbReference type="InterPro" id="IPR004417">
    <property type="entry name" value="TrmFO"/>
</dbReference>
<dbReference type="NCBIfam" id="TIGR00137">
    <property type="entry name" value="gid_trmFO"/>
    <property type="match status" value="1"/>
</dbReference>
<dbReference type="NCBIfam" id="NF003739">
    <property type="entry name" value="PRK05335.1"/>
    <property type="match status" value="1"/>
</dbReference>
<dbReference type="PANTHER" id="PTHR11806">
    <property type="entry name" value="GLUCOSE INHIBITED DIVISION PROTEIN A"/>
    <property type="match status" value="1"/>
</dbReference>
<dbReference type="PANTHER" id="PTHR11806:SF2">
    <property type="entry name" value="METHYLENETETRAHYDROFOLATE--TRNA-(URACIL-5-)-METHYLTRANSFERASE TRMFO"/>
    <property type="match status" value="1"/>
</dbReference>
<dbReference type="Pfam" id="PF01134">
    <property type="entry name" value="GIDA"/>
    <property type="match status" value="1"/>
</dbReference>
<dbReference type="SUPFAM" id="SSF51905">
    <property type="entry name" value="FAD/NAD(P)-binding domain"/>
    <property type="match status" value="1"/>
</dbReference>
<dbReference type="PROSITE" id="PS01281">
    <property type="entry name" value="GIDA_2"/>
    <property type="match status" value="1"/>
</dbReference>
<sequence length="474" mass="51368">MTTNSTYQPVHVIGGGLAGSEAAWQIAQSGVPVILHEMRKDDATGKVITDAHQTDGLAEMVCSNSFRSDDWQFNAVGLLHAEMRKLGSLIMSCADQHQVPAGGALAVDRDGFSTEVTKRLSQHPLVTIVREEIAGLPPAPDGKNGWDNVIVATGPLTSPALAQAVLDLTGEGQLSFFDAIAPIIHFESINMDIAWRQSRYDKEGPGGDAAAYINCPMNKEQYEAFIDALLAGPKSEFKEWENVPYFDGCLPIEVMAERGRETLRHGPMKPVGLTNPRDPLVKAYAIVQLRQDNALGTLWNMVGFQTKLKHGVQAETFRMIPGLEDAQFARLGGLHRNTFINSPKLLDKSLRMKAQPRLRFAGQVTGVEGYVESAAMGLLTGRFAAADRKGAPIDAPPPTTALGALVEHITGGHLEAGNGPGSFQPMNINYGLLPPLEAPKVDEDGKKIPLKERGRAKKRLMSLRALKDLDAWMA</sequence>
<evidence type="ECO:0000255" key="1">
    <source>
        <dbReference type="HAMAP-Rule" id="MF_01037"/>
    </source>
</evidence>
<reference key="1">
    <citation type="journal article" date="2001" name="Proc. Natl. Acad. Sci. U.S.A.">
        <title>Complete genome sequence of Caulobacter crescentus.</title>
        <authorList>
            <person name="Nierman W.C."/>
            <person name="Feldblyum T.V."/>
            <person name="Laub M.T."/>
            <person name="Paulsen I.T."/>
            <person name="Nelson K.E."/>
            <person name="Eisen J.A."/>
            <person name="Heidelberg J.F."/>
            <person name="Alley M.R.K."/>
            <person name="Ohta N."/>
            <person name="Maddock J.R."/>
            <person name="Potocka I."/>
            <person name="Nelson W.C."/>
            <person name="Newton A."/>
            <person name="Stephens C."/>
            <person name="Phadke N.D."/>
            <person name="Ely B."/>
            <person name="DeBoy R.T."/>
            <person name="Dodson R.J."/>
            <person name="Durkin A.S."/>
            <person name="Gwinn M.L."/>
            <person name="Haft D.H."/>
            <person name="Kolonay J.F."/>
            <person name="Smit J."/>
            <person name="Craven M.B."/>
            <person name="Khouri H.M."/>
            <person name="Shetty J."/>
            <person name="Berry K.J."/>
            <person name="Utterback T.R."/>
            <person name="Tran K."/>
            <person name="Wolf A.M."/>
            <person name="Vamathevan J.J."/>
            <person name="Ermolaeva M.D."/>
            <person name="White O."/>
            <person name="Salzberg S.L."/>
            <person name="Venter J.C."/>
            <person name="Shapiro L."/>
            <person name="Fraser C.M."/>
        </authorList>
    </citation>
    <scope>NUCLEOTIDE SEQUENCE [LARGE SCALE GENOMIC DNA]</scope>
    <source>
        <strain>ATCC 19089 / CIP 103742 / CB 15</strain>
    </source>
</reference>
<organism>
    <name type="scientific">Caulobacter vibrioides (strain ATCC 19089 / CIP 103742 / CB 15)</name>
    <name type="common">Caulobacter crescentus</name>
    <dbReference type="NCBI Taxonomy" id="190650"/>
    <lineage>
        <taxon>Bacteria</taxon>
        <taxon>Pseudomonadati</taxon>
        <taxon>Pseudomonadota</taxon>
        <taxon>Alphaproteobacteria</taxon>
        <taxon>Caulobacterales</taxon>
        <taxon>Caulobacteraceae</taxon>
        <taxon>Caulobacter</taxon>
    </lineage>
</organism>
<gene>
    <name evidence="1" type="primary">trmFO</name>
    <name type="synonym">gid</name>
    <name type="ordered locus">CC_2598</name>
</gene>
<name>TRMFO_CAUVC</name>
<accession>Q9A566</accession>